<keyword id="KW-0489">Methyltransferase</keyword>
<keyword id="KW-0949">S-adenosyl-L-methionine</keyword>
<keyword id="KW-0808">Transferase</keyword>
<keyword id="KW-0819">tRNA processing</keyword>
<reference key="1">
    <citation type="journal article" date="2006" name="Genome Res.">
        <title>Skewed genomic variability in strains of the toxigenic bacterial pathogen, Clostridium perfringens.</title>
        <authorList>
            <person name="Myers G.S.A."/>
            <person name="Rasko D.A."/>
            <person name="Cheung J.K."/>
            <person name="Ravel J."/>
            <person name="Seshadri R."/>
            <person name="DeBoy R.T."/>
            <person name="Ren Q."/>
            <person name="Varga J."/>
            <person name="Awad M.M."/>
            <person name="Brinkac L.M."/>
            <person name="Daugherty S.C."/>
            <person name="Haft D.H."/>
            <person name="Dodson R.J."/>
            <person name="Madupu R."/>
            <person name="Nelson W.C."/>
            <person name="Rosovitz M.J."/>
            <person name="Sullivan S.A."/>
            <person name="Khouri H."/>
            <person name="Dimitrov G.I."/>
            <person name="Watkins K.L."/>
            <person name="Mulligan S."/>
            <person name="Benton J."/>
            <person name="Radune D."/>
            <person name="Fisher D.J."/>
            <person name="Atkins H.S."/>
            <person name="Hiscox T."/>
            <person name="Jost B.H."/>
            <person name="Billington S.J."/>
            <person name="Songer J.G."/>
            <person name="McClane B.A."/>
            <person name="Titball R.W."/>
            <person name="Rood J.I."/>
            <person name="Melville S.B."/>
            <person name="Paulsen I.T."/>
        </authorList>
    </citation>
    <scope>NUCLEOTIDE SEQUENCE [LARGE SCALE GENOMIC DNA]</scope>
    <source>
        <strain>SM101 / Type A</strain>
    </source>
</reference>
<comment type="function">
    <text evidence="1">Catalyzes the formation of N(7)-methylguanine at position 46 (m7G46) in tRNA.</text>
</comment>
<comment type="catalytic activity">
    <reaction evidence="1">
        <text>guanosine(46) in tRNA + S-adenosyl-L-methionine = N(7)-methylguanosine(46) in tRNA + S-adenosyl-L-homocysteine</text>
        <dbReference type="Rhea" id="RHEA:42708"/>
        <dbReference type="Rhea" id="RHEA-COMP:10188"/>
        <dbReference type="Rhea" id="RHEA-COMP:10189"/>
        <dbReference type="ChEBI" id="CHEBI:57856"/>
        <dbReference type="ChEBI" id="CHEBI:59789"/>
        <dbReference type="ChEBI" id="CHEBI:74269"/>
        <dbReference type="ChEBI" id="CHEBI:74480"/>
        <dbReference type="EC" id="2.1.1.33"/>
    </reaction>
</comment>
<comment type="pathway">
    <text evidence="1">tRNA modification; N(7)-methylguanine-tRNA biosynthesis.</text>
</comment>
<comment type="similarity">
    <text evidence="1">Belongs to the class I-like SAM-binding methyltransferase superfamily. TrmB family.</text>
</comment>
<gene>
    <name evidence="1" type="primary">trmB</name>
    <name type="ordered locus">CPR_0422</name>
</gene>
<name>TRMB_CLOPS</name>
<protein>
    <recommendedName>
        <fullName evidence="1">tRNA (guanine-N(7)-)-methyltransferase</fullName>
        <ecNumber evidence="1">2.1.1.33</ecNumber>
    </recommendedName>
    <alternativeName>
        <fullName evidence="1">tRNA (guanine(46)-N(7))-methyltransferase</fullName>
    </alternativeName>
    <alternativeName>
        <fullName evidence="1">tRNA(m7G46)-methyltransferase</fullName>
    </alternativeName>
</protein>
<feature type="chain" id="PRO_0000288141" description="tRNA (guanine-N(7)-)-methyltransferase">
    <location>
        <begin position="1"/>
        <end position="219"/>
    </location>
</feature>
<feature type="binding site" evidence="1">
    <location>
        <position position="44"/>
    </location>
    <ligand>
        <name>S-adenosyl-L-methionine</name>
        <dbReference type="ChEBI" id="CHEBI:59789"/>
    </ligand>
</feature>
<feature type="binding site" evidence="1">
    <location>
        <position position="69"/>
    </location>
    <ligand>
        <name>S-adenosyl-L-methionine</name>
        <dbReference type="ChEBI" id="CHEBI:59789"/>
    </ligand>
</feature>
<feature type="binding site" evidence="1">
    <location>
        <position position="102"/>
    </location>
    <ligand>
        <name>S-adenosyl-L-methionine</name>
        <dbReference type="ChEBI" id="CHEBI:59789"/>
    </ligand>
</feature>
<feature type="binding site" evidence="1">
    <location>
        <position position="125"/>
    </location>
    <ligand>
        <name>S-adenosyl-L-methionine</name>
        <dbReference type="ChEBI" id="CHEBI:59789"/>
    </ligand>
</feature>
<feature type="binding site" evidence="1">
    <location>
        <position position="129"/>
    </location>
    <ligand>
        <name>substrate</name>
    </ligand>
</feature>
<feature type="binding site" evidence="1">
    <location>
        <position position="161"/>
    </location>
    <ligand>
        <name>substrate</name>
    </ligand>
</feature>
<dbReference type="EC" id="2.1.1.33" evidence="1"/>
<dbReference type="EMBL" id="CP000312">
    <property type="protein sequence ID" value="ABG86310.1"/>
    <property type="molecule type" value="Genomic_DNA"/>
</dbReference>
<dbReference type="RefSeq" id="WP_011591532.1">
    <property type="nucleotide sequence ID" value="NC_008262.1"/>
</dbReference>
<dbReference type="SMR" id="Q0SVU9"/>
<dbReference type="KEGG" id="cpr:CPR_0422"/>
<dbReference type="UniPathway" id="UPA00989"/>
<dbReference type="Proteomes" id="UP000001824">
    <property type="component" value="Chromosome"/>
</dbReference>
<dbReference type="GO" id="GO:0043527">
    <property type="term" value="C:tRNA methyltransferase complex"/>
    <property type="evidence" value="ECO:0007669"/>
    <property type="project" value="TreeGrafter"/>
</dbReference>
<dbReference type="GO" id="GO:0008176">
    <property type="term" value="F:tRNA (guanine(46)-N7)-methyltransferase activity"/>
    <property type="evidence" value="ECO:0007669"/>
    <property type="project" value="UniProtKB-UniRule"/>
</dbReference>
<dbReference type="CDD" id="cd02440">
    <property type="entry name" value="AdoMet_MTases"/>
    <property type="match status" value="1"/>
</dbReference>
<dbReference type="Gene3D" id="3.40.50.150">
    <property type="entry name" value="Vaccinia Virus protein VP39"/>
    <property type="match status" value="1"/>
</dbReference>
<dbReference type="HAMAP" id="MF_01057">
    <property type="entry name" value="tRNA_methyltr_TrmB"/>
    <property type="match status" value="1"/>
</dbReference>
<dbReference type="InterPro" id="IPR029063">
    <property type="entry name" value="SAM-dependent_MTases_sf"/>
</dbReference>
<dbReference type="InterPro" id="IPR003358">
    <property type="entry name" value="tRNA_(Gua-N-7)_MeTrfase_Trmb"/>
</dbReference>
<dbReference type="InterPro" id="IPR055361">
    <property type="entry name" value="tRNA_methyltr_TrmB_bact"/>
</dbReference>
<dbReference type="NCBIfam" id="NF001080">
    <property type="entry name" value="PRK00121.2-2"/>
    <property type="match status" value="1"/>
</dbReference>
<dbReference type="NCBIfam" id="TIGR00091">
    <property type="entry name" value="tRNA (guanosine(46)-N7)-methyltransferase TrmB"/>
    <property type="match status" value="1"/>
</dbReference>
<dbReference type="PANTHER" id="PTHR23417">
    <property type="entry name" value="3-DEOXY-D-MANNO-OCTULOSONIC-ACID TRANSFERASE/TRNA GUANINE-N 7 - -METHYLTRANSFERASE"/>
    <property type="match status" value="1"/>
</dbReference>
<dbReference type="PANTHER" id="PTHR23417:SF14">
    <property type="entry name" value="PENTACOTRIPEPTIDE-REPEAT REGION OF PRORP DOMAIN-CONTAINING PROTEIN"/>
    <property type="match status" value="1"/>
</dbReference>
<dbReference type="Pfam" id="PF02390">
    <property type="entry name" value="Methyltransf_4"/>
    <property type="match status" value="1"/>
</dbReference>
<dbReference type="SUPFAM" id="SSF53335">
    <property type="entry name" value="S-adenosyl-L-methionine-dependent methyltransferases"/>
    <property type="match status" value="1"/>
</dbReference>
<dbReference type="PROSITE" id="PS51625">
    <property type="entry name" value="SAM_MT_TRMB"/>
    <property type="match status" value="1"/>
</dbReference>
<evidence type="ECO:0000255" key="1">
    <source>
        <dbReference type="HAMAP-Rule" id="MF_01057"/>
    </source>
</evidence>
<sequence length="219" mass="25980">MRMRRKPWARPELEACDFFVANPKENKGNWKNTFKNTENPIYLELGCGKGTFMAVHGSDHPNINYIAIDIKDEVLVLAKRNIEKAYEEKNKALDNVKLMPQEIALIDTILDSNDKIERIYINFCNPWPKDRHKKRRLTHPRQLTKYRDFLVDGGEIHFKTDDDELFEESLEYFKECNFEITYITRDLHNSGYEYNVVTEHEEMFSKQGIKIKFLIAKKL</sequence>
<proteinExistence type="inferred from homology"/>
<accession>Q0SVU9</accession>
<organism>
    <name type="scientific">Clostridium perfringens (strain SM101 / Type A)</name>
    <dbReference type="NCBI Taxonomy" id="289380"/>
    <lineage>
        <taxon>Bacteria</taxon>
        <taxon>Bacillati</taxon>
        <taxon>Bacillota</taxon>
        <taxon>Clostridia</taxon>
        <taxon>Eubacteriales</taxon>
        <taxon>Clostridiaceae</taxon>
        <taxon>Clostridium</taxon>
    </lineage>
</organism>